<feature type="chain" id="PRO_0000301932" description="3-hydroxyacyl-[acyl-carrier-protein] dehydratase FabZ">
    <location>
        <begin position="1"/>
        <end position="140"/>
    </location>
</feature>
<feature type="active site" evidence="1">
    <location>
        <position position="47"/>
    </location>
</feature>
<reference key="1">
    <citation type="journal article" date="2007" name="J. Bacteriol.">
        <title>Genome sequence of Avery's virulent serotype 2 strain D39 of Streptococcus pneumoniae and comparison with that of unencapsulated laboratory strain R6.</title>
        <authorList>
            <person name="Lanie J.A."/>
            <person name="Ng W.-L."/>
            <person name="Kazmierczak K.M."/>
            <person name="Andrzejewski T.M."/>
            <person name="Davidsen T.M."/>
            <person name="Wayne K.J."/>
            <person name="Tettelin H."/>
            <person name="Glass J.I."/>
            <person name="Winkler M.E."/>
        </authorList>
    </citation>
    <scope>NUCLEOTIDE SEQUENCE [LARGE SCALE GENOMIC DNA]</scope>
    <source>
        <strain>D39 / NCTC 7466</strain>
    </source>
</reference>
<sequence>MIDIQGIKEALPHRYPMLLVDRVLEVSEDTIVAIKNVTINEPFFNGHFPQYPVMPGVLIMEALAQTAGVLELSKPENKGKLVFYAGMDKVKFKKQVVPGDQLVMTATFVKRRGTIAVVEAKAEVDGKLAASGILTFAIGN</sequence>
<proteinExistence type="inferred from homology"/>
<dbReference type="EC" id="4.2.1.59" evidence="1"/>
<dbReference type="EMBL" id="CP000410">
    <property type="protein sequence ID" value="ABJ55098.1"/>
    <property type="molecule type" value="Genomic_DNA"/>
</dbReference>
<dbReference type="RefSeq" id="WP_000565514.1">
    <property type="nucleotide sequence ID" value="NZ_JAMLJR010000009.1"/>
</dbReference>
<dbReference type="SMR" id="Q04M51"/>
<dbReference type="PaxDb" id="373153-SPD_0387"/>
<dbReference type="GeneID" id="45652122"/>
<dbReference type="KEGG" id="spd:SPD_0387"/>
<dbReference type="eggNOG" id="COG0764">
    <property type="taxonomic scope" value="Bacteria"/>
</dbReference>
<dbReference type="HOGENOM" id="CLU_078912_3_0_9"/>
<dbReference type="BioCyc" id="SPNE373153:G1G6V-425-MONOMER"/>
<dbReference type="Proteomes" id="UP000001452">
    <property type="component" value="Chromosome"/>
</dbReference>
<dbReference type="GO" id="GO:0005737">
    <property type="term" value="C:cytoplasm"/>
    <property type="evidence" value="ECO:0007669"/>
    <property type="project" value="UniProtKB-SubCell"/>
</dbReference>
<dbReference type="GO" id="GO:0016020">
    <property type="term" value="C:membrane"/>
    <property type="evidence" value="ECO:0007669"/>
    <property type="project" value="GOC"/>
</dbReference>
<dbReference type="GO" id="GO:0019171">
    <property type="term" value="F:(3R)-hydroxyacyl-[acyl-carrier-protein] dehydratase activity"/>
    <property type="evidence" value="ECO:0007669"/>
    <property type="project" value="UniProtKB-EC"/>
</dbReference>
<dbReference type="GO" id="GO:0006633">
    <property type="term" value="P:fatty acid biosynthetic process"/>
    <property type="evidence" value="ECO:0007669"/>
    <property type="project" value="UniProtKB-UniRule"/>
</dbReference>
<dbReference type="GO" id="GO:0009245">
    <property type="term" value="P:lipid A biosynthetic process"/>
    <property type="evidence" value="ECO:0007669"/>
    <property type="project" value="UniProtKB-UniRule"/>
</dbReference>
<dbReference type="CDD" id="cd01288">
    <property type="entry name" value="FabZ"/>
    <property type="match status" value="1"/>
</dbReference>
<dbReference type="FunFam" id="3.10.129.10:FF:000001">
    <property type="entry name" value="3-hydroxyacyl-[acyl-carrier-protein] dehydratase FabZ"/>
    <property type="match status" value="1"/>
</dbReference>
<dbReference type="Gene3D" id="3.10.129.10">
    <property type="entry name" value="Hotdog Thioesterase"/>
    <property type="match status" value="1"/>
</dbReference>
<dbReference type="HAMAP" id="MF_00406">
    <property type="entry name" value="FabZ"/>
    <property type="match status" value="1"/>
</dbReference>
<dbReference type="InterPro" id="IPR013114">
    <property type="entry name" value="FabA_FabZ"/>
</dbReference>
<dbReference type="InterPro" id="IPR010084">
    <property type="entry name" value="FabZ"/>
</dbReference>
<dbReference type="InterPro" id="IPR029069">
    <property type="entry name" value="HotDog_dom_sf"/>
</dbReference>
<dbReference type="NCBIfam" id="TIGR01750">
    <property type="entry name" value="fabZ"/>
    <property type="match status" value="1"/>
</dbReference>
<dbReference type="NCBIfam" id="NF000582">
    <property type="entry name" value="PRK00006.1"/>
    <property type="match status" value="1"/>
</dbReference>
<dbReference type="PANTHER" id="PTHR30272">
    <property type="entry name" value="3-HYDROXYACYL-[ACYL-CARRIER-PROTEIN] DEHYDRATASE"/>
    <property type="match status" value="1"/>
</dbReference>
<dbReference type="PANTHER" id="PTHR30272:SF1">
    <property type="entry name" value="3-HYDROXYACYL-[ACYL-CARRIER-PROTEIN] DEHYDRATASE"/>
    <property type="match status" value="1"/>
</dbReference>
<dbReference type="Pfam" id="PF07977">
    <property type="entry name" value="FabA"/>
    <property type="match status" value="1"/>
</dbReference>
<dbReference type="SUPFAM" id="SSF54637">
    <property type="entry name" value="Thioesterase/thiol ester dehydrase-isomerase"/>
    <property type="match status" value="1"/>
</dbReference>
<accession>Q04M51</accession>
<protein>
    <recommendedName>
        <fullName evidence="1">3-hydroxyacyl-[acyl-carrier-protein] dehydratase FabZ</fullName>
        <ecNumber evidence="1">4.2.1.59</ecNumber>
    </recommendedName>
    <alternativeName>
        <fullName evidence="1">(3R)-hydroxymyristoyl-[acyl-carrier-protein] dehydratase</fullName>
        <shortName evidence="1">(3R)-hydroxymyristoyl-ACP dehydrase</shortName>
    </alternativeName>
    <alternativeName>
        <fullName evidence="1">Beta-hydroxyacyl-ACP dehydratase</fullName>
    </alternativeName>
</protein>
<gene>
    <name evidence="1" type="primary">fabZ</name>
    <name type="ordered locus">SPD_0387</name>
</gene>
<keyword id="KW-0963">Cytoplasm</keyword>
<keyword id="KW-0441">Lipid A biosynthesis</keyword>
<keyword id="KW-0444">Lipid biosynthesis</keyword>
<keyword id="KW-0443">Lipid metabolism</keyword>
<keyword id="KW-0456">Lyase</keyword>
<keyword id="KW-1185">Reference proteome</keyword>
<organism>
    <name type="scientific">Streptococcus pneumoniae serotype 2 (strain D39 / NCTC 7466)</name>
    <dbReference type="NCBI Taxonomy" id="373153"/>
    <lineage>
        <taxon>Bacteria</taxon>
        <taxon>Bacillati</taxon>
        <taxon>Bacillota</taxon>
        <taxon>Bacilli</taxon>
        <taxon>Lactobacillales</taxon>
        <taxon>Streptococcaceae</taxon>
        <taxon>Streptococcus</taxon>
    </lineage>
</organism>
<evidence type="ECO:0000255" key="1">
    <source>
        <dbReference type="HAMAP-Rule" id="MF_00406"/>
    </source>
</evidence>
<name>FABZ_STRP2</name>
<comment type="function">
    <text evidence="1">Involved in unsaturated fatty acids biosynthesis. Catalyzes the dehydration of short chain beta-hydroxyacyl-ACPs and long chain saturated and unsaturated beta-hydroxyacyl-ACPs.</text>
</comment>
<comment type="catalytic activity">
    <reaction evidence="1">
        <text>a (3R)-hydroxyacyl-[ACP] = a (2E)-enoyl-[ACP] + H2O</text>
        <dbReference type="Rhea" id="RHEA:13097"/>
        <dbReference type="Rhea" id="RHEA-COMP:9925"/>
        <dbReference type="Rhea" id="RHEA-COMP:9945"/>
        <dbReference type="ChEBI" id="CHEBI:15377"/>
        <dbReference type="ChEBI" id="CHEBI:78784"/>
        <dbReference type="ChEBI" id="CHEBI:78827"/>
        <dbReference type="EC" id="4.2.1.59"/>
    </reaction>
</comment>
<comment type="subcellular location">
    <subcellularLocation>
        <location evidence="1">Cytoplasm</location>
    </subcellularLocation>
</comment>
<comment type="similarity">
    <text evidence="1">Belongs to the thioester dehydratase family. FabZ subfamily.</text>
</comment>